<name>GCH1_WIGBR</name>
<protein>
    <recommendedName>
        <fullName evidence="2">GTP cyclohydrolase 1</fullName>
        <ecNumber evidence="2">3.5.4.16</ecNumber>
    </recommendedName>
    <alternativeName>
        <fullName evidence="2">GTP cyclohydrolase I</fullName>
        <shortName evidence="2">GTP-CH-I</shortName>
    </alternativeName>
</protein>
<accession>Q8D2N7</accession>
<keyword id="KW-0342">GTP-binding</keyword>
<keyword id="KW-0378">Hydrolase</keyword>
<keyword id="KW-0479">Metal-binding</keyword>
<keyword id="KW-0547">Nucleotide-binding</keyword>
<keyword id="KW-0554">One-carbon metabolism</keyword>
<keyword id="KW-1185">Reference proteome</keyword>
<keyword id="KW-0862">Zinc</keyword>
<feature type="chain" id="PRO_0000119464" description="GTP cyclohydrolase 1">
    <location>
        <begin position="1"/>
        <end position="216"/>
    </location>
</feature>
<feature type="binding site" evidence="2">
    <location>
        <position position="109"/>
    </location>
    <ligand>
        <name>Zn(2+)</name>
        <dbReference type="ChEBI" id="CHEBI:29105"/>
    </ligand>
</feature>
<feature type="binding site" evidence="2">
    <location>
        <position position="112"/>
    </location>
    <ligand>
        <name>Zn(2+)</name>
        <dbReference type="ChEBI" id="CHEBI:29105"/>
    </ligand>
</feature>
<feature type="binding site" evidence="2">
    <location>
        <position position="180"/>
    </location>
    <ligand>
        <name>Zn(2+)</name>
        <dbReference type="ChEBI" id="CHEBI:29105"/>
    </ligand>
</feature>
<organism>
    <name type="scientific">Wigglesworthia glossinidia brevipalpis</name>
    <dbReference type="NCBI Taxonomy" id="36870"/>
    <lineage>
        <taxon>Bacteria</taxon>
        <taxon>Pseudomonadati</taxon>
        <taxon>Pseudomonadota</taxon>
        <taxon>Gammaproteobacteria</taxon>
        <taxon>Enterobacterales</taxon>
        <taxon>Erwiniaceae</taxon>
        <taxon>Wigglesworthia</taxon>
    </lineage>
</organism>
<sequence length="216" mass="24698">MEVLTKEALLVKNALLNKGIETPFKKIYEKNKPDIHKISKYIKKIMDLLNLDLNNDSLSKTPNRIAYMYIEEIFSGLNYNNFPKITLIKNTSKINDLITVNNIVLNSTCEHHFLIFEGKAIVSYIPDKILIGLSKINRIVDFFSKRPQIQERLTNQILVAIQILLDTKNVAVAIKAKHLCVKARGIKDSHSKTLTLSLGGVFKSKQNIKKEFLKDF</sequence>
<dbReference type="EC" id="3.5.4.16" evidence="2"/>
<dbReference type="EMBL" id="BA000021">
    <property type="protein sequence ID" value="BAC24463.1"/>
    <property type="molecule type" value="Genomic_DNA"/>
</dbReference>
<dbReference type="SMR" id="Q8D2N7"/>
<dbReference type="STRING" id="36870.gene:10368816"/>
<dbReference type="KEGG" id="wbr:folE"/>
<dbReference type="eggNOG" id="COG0302">
    <property type="taxonomic scope" value="Bacteria"/>
</dbReference>
<dbReference type="HOGENOM" id="CLU_049768_3_2_6"/>
<dbReference type="OrthoDB" id="9801207at2"/>
<dbReference type="UniPathway" id="UPA00848">
    <property type="reaction ID" value="UER00151"/>
</dbReference>
<dbReference type="Proteomes" id="UP000000562">
    <property type="component" value="Chromosome"/>
</dbReference>
<dbReference type="GO" id="GO:0005737">
    <property type="term" value="C:cytoplasm"/>
    <property type="evidence" value="ECO:0007669"/>
    <property type="project" value="TreeGrafter"/>
</dbReference>
<dbReference type="GO" id="GO:0005525">
    <property type="term" value="F:GTP binding"/>
    <property type="evidence" value="ECO:0007669"/>
    <property type="project" value="UniProtKB-KW"/>
</dbReference>
<dbReference type="GO" id="GO:0003934">
    <property type="term" value="F:GTP cyclohydrolase I activity"/>
    <property type="evidence" value="ECO:0007669"/>
    <property type="project" value="UniProtKB-UniRule"/>
</dbReference>
<dbReference type="GO" id="GO:0008270">
    <property type="term" value="F:zinc ion binding"/>
    <property type="evidence" value="ECO:0007669"/>
    <property type="project" value="UniProtKB-UniRule"/>
</dbReference>
<dbReference type="GO" id="GO:0006730">
    <property type="term" value="P:one-carbon metabolic process"/>
    <property type="evidence" value="ECO:0007669"/>
    <property type="project" value="UniProtKB-UniRule"/>
</dbReference>
<dbReference type="GO" id="GO:0006729">
    <property type="term" value="P:tetrahydrobiopterin biosynthetic process"/>
    <property type="evidence" value="ECO:0007669"/>
    <property type="project" value="TreeGrafter"/>
</dbReference>
<dbReference type="GO" id="GO:0046654">
    <property type="term" value="P:tetrahydrofolate biosynthetic process"/>
    <property type="evidence" value="ECO:0007669"/>
    <property type="project" value="UniProtKB-UniRule"/>
</dbReference>
<dbReference type="FunFam" id="3.30.1130.10:FF:000001">
    <property type="entry name" value="GTP cyclohydrolase 1"/>
    <property type="match status" value="1"/>
</dbReference>
<dbReference type="Gene3D" id="1.10.286.10">
    <property type="match status" value="1"/>
</dbReference>
<dbReference type="Gene3D" id="3.30.1130.10">
    <property type="match status" value="1"/>
</dbReference>
<dbReference type="HAMAP" id="MF_00223">
    <property type="entry name" value="FolE"/>
    <property type="match status" value="1"/>
</dbReference>
<dbReference type="InterPro" id="IPR043133">
    <property type="entry name" value="GTP-CH-I_C/QueF"/>
</dbReference>
<dbReference type="InterPro" id="IPR043134">
    <property type="entry name" value="GTP-CH-I_N"/>
</dbReference>
<dbReference type="InterPro" id="IPR001474">
    <property type="entry name" value="GTP_CycHdrlase_I"/>
</dbReference>
<dbReference type="InterPro" id="IPR018234">
    <property type="entry name" value="GTP_CycHdrlase_I_CS"/>
</dbReference>
<dbReference type="InterPro" id="IPR020602">
    <property type="entry name" value="GTP_CycHdrlase_I_dom"/>
</dbReference>
<dbReference type="NCBIfam" id="TIGR00063">
    <property type="entry name" value="folE"/>
    <property type="match status" value="1"/>
</dbReference>
<dbReference type="NCBIfam" id="NF006824">
    <property type="entry name" value="PRK09347.1-1"/>
    <property type="match status" value="1"/>
</dbReference>
<dbReference type="NCBIfam" id="NF006826">
    <property type="entry name" value="PRK09347.1-3"/>
    <property type="match status" value="1"/>
</dbReference>
<dbReference type="PANTHER" id="PTHR11109:SF7">
    <property type="entry name" value="GTP CYCLOHYDROLASE 1"/>
    <property type="match status" value="1"/>
</dbReference>
<dbReference type="PANTHER" id="PTHR11109">
    <property type="entry name" value="GTP CYCLOHYDROLASE I"/>
    <property type="match status" value="1"/>
</dbReference>
<dbReference type="Pfam" id="PF01227">
    <property type="entry name" value="GTP_cyclohydroI"/>
    <property type="match status" value="1"/>
</dbReference>
<dbReference type="SUPFAM" id="SSF55620">
    <property type="entry name" value="Tetrahydrobiopterin biosynthesis enzymes-like"/>
    <property type="match status" value="1"/>
</dbReference>
<dbReference type="PROSITE" id="PS00859">
    <property type="entry name" value="GTP_CYCLOHYDROL_1_1"/>
    <property type="match status" value="1"/>
</dbReference>
<dbReference type="PROSITE" id="PS00860">
    <property type="entry name" value="GTP_CYCLOHYDROL_1_2"/>
    <property type="match status" value="1"/>
</dbReference>
<comment type="catalytic activity">
    <reaction evidence="2">
        <text>GTP + H2O = 7,8-dihydroneopterin 3'-triphosphate + formate + H(+)</text>
        <dbReference type="Rhea" id="RHEA:17473"/>
        <dbReference type="ChEBI" id="CHEBI:15377"/>
        <dbReference type="ChEBI" id="CHEBI:15378"/>
        <dbReference type="ChEBI" id="CHEBI:15740"/>
        <dbReference type="ChEBI" id="CHEBI:37565"/>
        <dbReference type="ChEBI" id="CHEBI:58462"/>
        <dbReference type="EC" id="3.5.4.16"/>
    </reaction>
</comment>
<comment type="pathway">
    <text evidence="2">Cofactor biosynthesis; 7,8-dihydroneopterin triphosphate biosynthesis; 7,8-dihydroneopterin triphosphate from GTP: step 1/1.</text>
</comment>
<comment type="subunit">
    <text evidence="1">Toroid-shaped homodecamer, composed of two pentamers of five dimers.</text>
</comment>
<comment type="similarity">
    <text evidence="2">Belongs to the GTP cyclohydrolase I family.</text>
</comment>
<reference key="1">
    <citation type="journal article" date="2002" name="Nat. Genet.">
        <title>Genome sequence of the endocellular obligate symbiont of tsetse flies, Wigglesworthia glossinidia.</title>
        <authorList>
            <person name="Akman L."/>
            <person name="Yamashita A."/>
            <person name="Watanabe H."/>
            <person name="Oshima K."/>
            <person name="Shiba T."/>
            <person name="Hattori M."/>
            <person name="Aksoy S."/>
        </authorList>
    </citation>
    <scope>NUCLEOTIDE SEQUENCE [LARGE SCALE GENOMIC DNA]</scope>
</reference>
<proteinExistence type="inferred from homology"/>
<gene>
    <name evidence="2" type="primary">folE</name>
    <name type="ordered locus">WIGBR3170</name>
</gene>
<evidence type="ECO:0000250" key="1"/>
<evidence type="ECO:0000255" key="2">
    <source>
        <dbReference type="HAMAP-Rule" id="MF_00223"/>
    </source>
</evidence>